<organism>
    <name type="scientific">Geotalea daltonii (strain DSM 22248 / JCM 15807 / FRC-32)</name>
    <name type="common">Geobacter daltonii</name>
    <dbReference type="NCBI Taxonomy" id="316067"/>
    <lineage>
        <taxon>Bacteria</taxon>
        <taxon>Pseudomonadati</taxon>
        <taxon>Thermodesulfobacteriota</taxon>
        <taxon>Desulfuromonadia</taxon>
        <taxon>Geobacterales</taxon>
        <taxon>Geobacteraceae</taxon>
        <taxon>Geotalea</taxon>
    </lineage>
</organism>
<sequence>MNIIVVGLSHKTAAVEIREKVAFSPTQMEKPLHALVSIPDITEGVIVSTCNRVEIYATTRDIAGGIARLKRFLADYHNFPLETLEPHLYSYHGEAATRHVFRVASSLDSMVVGEPQILGQIKTSYGYAAEYKSSGIILNRFLHKAFSVAKRVRTETKIASSAVSVAFAAVELAKKIFGDLSDKTVMLIGAGEMCELAAKHFINTGVRGVMVTNRTFERAVKLAEEFDGKAVNYEDLFDQLHKADIILSSTGAPHFIIKPKDIEDVIRRRKLKPMFFIDIAVPRDIDPKVNDIENIYLYTVDDLNGVVATNLEQRKKESEKAEAIVEQEIGQFFKWLSSLEVTPTIVALRSKFDEIRRAELAKTMANWKDLPPEGEKRLEALTNAIMNKLLHQPTSVLKRSDQGNRNDLYVDALRNLFDLETAPHEEMELGELEE</sequence>
<evidence type="ECO:0000255" key="1">
    <source>
        <dbReference type="HAMAP-Rule" id="MF_00087"/>
    </source>
</evidence>
<gene>
    <name evidence="1" type="primary">hemA</name>
    <name type="ordered locus">Geob_1300</name>
</gene>
<comment type="function">
    <text evidence="1">Catalyzes the NADPH-dependent reduction of glutamyl-tRNA(Glu) to glutamate 1-semialdehyde (GSA).</text>
</comment>
<comment type="catalytic activity">
    <reaction evidence="1">
        <text>(S)-4-amino-5-oxopentanoate + tRNA(Glu) + NADP(+) = L-glutamyl-tRNA(Glu) + NADPH + H(+)</text>
        <dbReference type="Rhea" id="RHEA:12344"/>
        <dbReference type="Rhea" id="RHEA-COMP:9663"/>
        <dbReference type="Rhea" id="RHEA-COMP:9680"/>
        <dbReference type="ChEBI" id="CHEBI:15378"/>
        <dbReference type="ChEBI" id="CHEBI:57501"/>
        <dbReference type="ChEBI" id="CHEBI:57783"/>
        <dbReference type="ChEBI" id="CHEBI:58349"/>
        <dbReference type="ChEBI" id="CHEBI:78442"/>
        <dbReference type="ChEBI" id="CHEBI:78520"/>
        <dbReference type="EC" id="1.2.1.70"/>
    </reaction>
</comment>
<comment type="pathway">
    <text evidence="1">Porphyrin-containing compound metabolism; protoporphyrin-IX biosynthesis; 5-aminolevulinate from L-glutamyl-tRNA(Glu): step 1/2.</text>
</comment>
<comment type="subunit">
    <text evidence="1">Homodimer.</text>
</comment>
<comment type="domain">
    <text evidence="1">Possesses an unusual extended V-shaped dimeric structure with each monomer consisting of three distinct domains arranged along a curved 'spinal' alpha-helix. The N-terminal catalytic domain specifically recognizes the glutamate moiety of the substrate. The second domain is the NADPH-binding domain, and the third C-terminal domain is responsible for dimerization.</text>
</comment>
<comment type="miscellaneous">
    <text evidence="1">During catalysis, the active site Cys acts as a nucleophile attacking the alpha-carbonyl group of tRNA-bound glutamate with the formation of a thioester intermediate between enzyme and glutamate, and the concomitant release of tRNA(Glu). The thioester intermediate is finally reduced by direct hydride transfer from NADPH, to form the product GSA.</text>
</comment>
<comment type="similarity">
    <text evidence="1">Belongs to the glutamyl-tRNA reductase family.</text>
</comment>
<proteinExistence type="inferred from homology"/>
<name>HEM1_GEODF</name>
<accession>B9M417</accession>
<keyword id="KW-0521">NADP</keyword>
<keyword id="KW-0560">Oxidoreductase</keyword>
<keyword id="KW-0627">Porphyrin biosynthesis</keyword>
<keyword id="KW-1185">Reference proteome</keyword>
<dbReference type="EC" id="1.2.1.70" evidence="1"/>
<dbReference type="EMBL" id="CP001390">
    <property type="protein sequence ID" value="ACM19660.1"/>
    <property type="molecule type" value="Genomic_DNA"/>
</dbReference>
<dbReference type="RefSeq" id="WP_012646389.1">
    <property type="nucleotide sequence ID" value="NC_011979.1"/>
</dbReference>
<dbReference type="SMR" id="B9M417"/>
<dbReference type="STRING" id="316067.Geob_1300"/>
<dbReference type="KEGG" id="geo:Geob_1300"/>
<dbReference type="eggNOG" id="COG0373">
    <property type="taxonomic scope" value="Bacteria"/>
</dbReference>
<dbReference type="HOGENOM" id="CLU_035113_2_2_7"/>
<dbReference type="OrthoDB" id="110209at2"/>
<dbReference type="UniPathway" id="UPA00251">
    <property type="reaction ID" value="UER00316"/>
</dbReference>
<dbReference type="Proteomes" id="UP000007721">
    <property type="component" value="Chromosome"/>
</dbReference>
<dbReference type="GO" id="GO:0008883">
    <property type="term" value="F:glutamyl-tRNA reductase activity"/>
    <property type="evidence" value="ECO:0007669"/>
    <property type="project" value="UniProtKB-UniRule"/>
</dbReference>
<dbReference type="GO" id="GO:0050661">
    <property type="term" value="F:NADP binding"/>
    <property type="evidence" value="ECO:0007669"/>
    <property type="project" value="InterPro"/>
</dbReference>
<dbReference type="GO" id="GO:0019353">
    <property type="term" value="P:protoporphyrinogen IX biosynthetic process from glutamate"/>
    <property type="evidence" value="ECO:0007669"/>
    <property type="project" value="TreeGrafter"/>
</dbReference>
<dbReference type="CDD" id="cd05213">
    <property type="entry name" value="NAD_bind_Glutamyl_tRNA_reduct"/>
    <property type="match status" value="1"/>
</dbReference>
<dbReference type="FunFam" id="3.30.460.30:FF:000001">
    <property type="entry name" value="Glutamyl-tRNA reductase"/>
    <property type="match status" value="1"/>
</dbReference>
<dbReference type="FunFam" id="3.40.50.720:FF:000031">
    <property type="entry name" value="Glutamyl-tRNA reductase"/>
    <property type="match status" value="1"/>
</dbReference>
<dbReference type="Gene3D" id="3.30.460.30">
    <property type="entry name" value="Glutamyl-tRNA reductase, N-terminal domain"/>
    <property type="match status" value="1"/>
</dbReference>
<dbReference type="Gene3D" id="3.40.50.720">
    <property type="entry name" value="NAD(P)-binding Rossmann-like Domain"/>
    <property type="match status" value="1"/>
</dbReference>
<dbReference type="HAMAP" id="MF_00087">
    <property type="entry name" value="Glu_tRNA_reductase"/>
    <property type="match status" value="1"/>
</dbReference>
<dbReference type="InterPro" id="IPR000343">
    <property type="entry name" value="4pyrrol_synth_GluRdtase"/>
</dbReference>
<dbReference type="InterPro" id="IPR015896">
    <property type="entry name" value="4pyrrol_synth_GluRdtase_dimer"/>
</dbReference>
<dbReference type="InterPro" id="IPR015895">
    <property type="entry name" value="4pyrrol_synth_GluRdtase_N"/>
</dbReference>
<dbReference type="InterPro" id="IPR018214">
    <property type="entry name" value="GluRdtase_CS"/>
</dbReference>
<dbReference type="InterPro" id="IPR036453">
    <property type="entry name" value="GluRdtase_dimer_dom_sf"/>
</dbReference>
<dbReference type="InterPro" id="IPR036343">
    <property type="entry name" value="GluRdtase_N_sf"/>
</dbReference>
<dbReference type="InterPro" id="IPR036291">
    <property type="entry name" value="NAD(P)-bd_dom_sf"/>
</dbReference>
<dbReference type="InterPro" id="IPR006151">
    <property type="entry name" value="Shikm_DH/Glu-tRNA_Rdtase"/>
</dbReference>
<dbReference type="NCBIfam" id="TIGR01035">
    <property type="entry name" value="hemA"/>
    <property type="match status" value="1"/>
</dbReference>
<dbReference type="NCBIfam" id="NF000744">
    <property type="entry name" value="PRK00045.1-3"/>
    <property type="match status" value="1"/>
</dbReference>
<dbReference type="PANTHER" id="PTHR43013">
    <property type="entry name" value="GLUTAMYL-TRNA REDUCTASE"/>
    <property type="match status" value="1"/>
</dbReference>
<dbReference type="PANTHER" id="PTHR43013:SF1">
    <property type="entry name" value="GLUTAMYL-TRNA REDUCTASE"/>
    <property type="match status" value="1"/>
</dbReference>
<dbReference type="Pfam" id="PF00745">
    <property type="entry name" value="GlutR_dimer"/>
    <property type="match status" value="1"/>
</dbReference>
<dbReference type="Pfam" id="PF05201">
    <property type="entry name" value="GlutR_N"/>
    <property type="match status" value="1"/>
</dbReference>
<dbReference type="Pfam" id="PF01488">
    <property type="entry name" value="Shikimate_DH"/>
    <property type="match status" value="1"/>
</dbReference>
<dbReference type="PIRSF" id="PIRSF000445">
    <property type="entry name" value="4pyrrol_synth_GluRdtase"/>
    <property type="match status" value="1"/>
</dbReference>
<dbReference type="SUPFAM" id="SSF69742">
    <property type="entry name" value="Glutamyl tRNA-reductase catalytic, N-terminal domain"/>
    <property type="match status" value="1"/>
</dbReference>
<dbReference type="SUPFAM" id="SSF69075">
    <property type="entry name" value="Glutamyl tRNA-reductase dimerization domain"/>
    <property type="match status" value="1"/>
</dbReference>
<dbReference type="SUPFAM" id="SSF51735">
    <property type="entry name" value="NAD(P)-binding Rossmann-fold domains"/>
    <property type="match status" value="1"/>
</dbReference>
<dbReference type="PROSITE" id="PS00747">
    <property type="entry name" value="GLUTR"/>
    <property type="match status" value="1"/>
</dbReference>
<reference key="1">
    <citation type="submission" date="2009-01" db="EMBL/GenBank/DDBJ databases">
        <title>Complete sequence of Geobacter sp. FRC-32.</title>
        <authorList>
            <consortium name="US DOE Joint Genome Institute"/>
            <person name="Lucas S."/>
            <person name="Copeland A."/>
            <person name="Lapidus A."/>
            <person name="Glavina del Rio T."/>
            <person name="Dalin E."/>
            <person name="Tice H."/>
            <person name="Bruce D."/>
            <person name="Goodwin L."/>
            <person name="Pitluck S."/>
            <person name="Saunders E."/>
            <person name="Brettin T."/>
            <person name="Detter J.C."/>
            <person name="Han C."/>
            <person name="Larimer F."/>
            <person name="Land M."/>
            <person name="Hauser L."/>
            <person name="Kyrpides N."/>
            <person name="Ovchinnikova G."/>
            <person name="Kostka J."/>
            <person name="Richardson P."/>
        </authorList>
    </citation>
    <scope>NUCLEOTIDE SEQUENCE [LARGE SCALE GENOMIC DNA]</scope>
    <source>
        <strain>DSM 22248 / JCM 15807 / FRC-32</strain>
    </source>
</reference>
<protein>
    <recommendedName>
        <fullName evidence="1">Glutamyl-tRNA reductase</fullName>
        <shortName evidence="1">GluTR</shortName>
        <ecNumber evidence="1">1.2.1.70</ecNumber>
    </recommendedName>
</protein>
<feature type="chain" id="PRO_1000190530" description="Glutamyl-tRNA reductase">
    <location>
        <begin position="1"/>
        <end position="434"/>
    </location>
</feature>
<feature type="active site" description="Nucleophile" evidence="1">
    <location>
        <position position="50"/>
    </location>
</feature>
<feature type="binding site" evidence="1">
    <location>
        <begin position="49"/>
        <end position="52"/>
    </location>
    <ligand>
        <name>substrate</name>
    </ligand>
</feature>
<feature type="binding site" evidence="1">
    <location>
        <position position="109"/>
    </location>
    <ligand>
        <name>substrate</name>
    </ligand>
</feature>
<feature type="binding site" evidence="1">
    <location>
        <begin position="114"/>
        <end position="116"/>
    </location>
    <ligand>
        <name>substrate</name>
    </ligand>
</feature>
<feature type="binding site" evidence="1">
    <location>
        <position position="120"/>
    </location>
    <ligand>
        <name>substrate</name>
    </ligand>
</feature>
<feature type="binding site" evidence="1">
    <location>
        <begin position="189"/>
        <end position="194"/>
    </location>
    <ligand>
        <name>NADP(+)</name>
        <dbReference type="ChEBI" id="CHEBI:58349"/>
    </ligand>
</feature>
<feature type="site" description="Important for activity" evidence="1">
    <location>
        <position position="99"/>
    </location>
</feature>